<proteinExistence type="inferred from homology"/>
<evidence type="ECO:0000255" key="1">
    <source>
        <dbReference type="HAMAP-Rule" id="MF_01021"/>
    </source>
</evidence>
<reference key="1">
    <citation type="journal article" date="2010" name="Stand. Genomic Sci.">
        <title>Complete genome sequence of Rhizobium leguminosarum bv trifolii strain WSM2304, an effective microsymbiont of the South American clover Trifolium polymorphum.</title>
        <authorList>
            <person name="Reeve W."/>
            <person name="O'Hara G."/>
            <person name="Chain P."/>
            <person name="Ardley J."/>
            <person name="Brau L."/>
            <person name="Nandesena K."/>
            <person name="Tiwari R."/>
            <person name="Malfatti S."/>
            <person name="Kiss H."/>
            <person name="Lapidus A."/>
            <person name="Copeland A."/>
            <person name="Nolan M."/>
            <person name="Land M."/>
            <person name="Ivanova N."/>
            <person name="Mavromatis K."/>
            <person name="Markowitz V."/>
            <person name="Kyrpides N."/>
            <person name="Melino V."/>
            <person name="Denton M."/>
            <person name="Yates R."/>
            <person name="Howieson J."/>
        </authorList>
    </citation>
    <scope>NUCLEOTIDE SEQUENCE [LARGE SCALE GENOMIC DNA]</scope>
    <source>
        <strain>WSM2304</strain>
    </source>
</reference>
<sequence length="150" mass="16720">MSQLIFSQPSEDKSALEDAGDFTPRFDDRGLITAIVTDAGDGELLMVAHMNAQALALTIQTGTAHYFSRSRGKIWKKGETSGNLQTVKEIRTDCDQDAIWLKVEVAGHDATCHTGRRSCFYRTIALRDGKPMLDIVDDERHFDPQDVYGK</sequence>
<protein>
    <recommendedName>
        <fullName evidence="1">Phosphoribosyl-AMP cyclohydrolase</fullName>
        <shortName evidence="1">PRA-CH</shortName>
        <ecNumber evidence="1">3.5.4.19</ecNumber>
    </recommendedName>
</protein>
<keyword id="KW-0028">Amino-acid biosynthesis</keyword>
<keyword id="KW-0963">Cytoplasm</keyword>
<keyword id="KW-0368">Histidine biosynthesis</keyword>
<keyword id="KW-0378">Hydrolase</keyword>
<keyword id="KW-0460">Magnesium</keyword>
<keyword id="KW-0479">Metal-binding</keyword>
<keyword id="KW-1185">Reference proteome</keyword>
<keyword id="KW-0862">Zinc</keyword>
<accession>B5ZQK7</accession>
<comment type="function">
    <text evidence="1">Catalyzes the hydrolysis of the adenine ring of phosphoribosyl-AMP.</text>
</comment>
<comment type="catalytic activity">
    <reaction evidence="1">
        <text>1-(5-phospho-beta-D-ribosyl)-5'-AMP + H2O = 1-(5-phospho-beta-D-ribosyl)-5-[(5-phospho-beta-D-ribosylamino)methylideneamino]imidazole-4-carboxamide</text>
        <dbReference type="Rhea" id="RHEA:20049"/>
        <dbReference type="ChEBI" id="CHEBI:15377"/>
        <dbReference type="ChEBI" id="CHEBI:58435"/>
        <dbReference type="ChEBI" id="CHEBI:59457"/>
        <dbReference type="EC" id="3.5.4.19"/>
    </reaction>
</comment>
<comment type="cofactor">
    <cofactor evidence="1">
        <name>Mg(2+)</name>
        <dbReference type="ChEBI" id="CHEBI:18420"/>
    </cofactor>
    <text evidence="1">Binds 1 Mg(2+) ion per subunit.</text>
</comment>
<comment type="cofactor">
    <cofactor evidence="1">
        <name>Zn(2+)</name>
        <dbReference type="ChEBI" id="CHEBI:29105"/>
    </cofactor>
    <text evidence="1">Binds 1 zinc ion per subunit.</text>
</comment>
<comment type="pathway">
    <text evidence="1">Amino-acid biosynthesis; L-histidine biosynthesis; L-histidine from 5-phospho-alpha-D-ribose 1-diphosphate: step 3/9.</text>
</comment>
<comment type="subunit">
    <text evidence="1">Homodimer.</text>
</comment>
<comment type="subcellular location">
    <subcellularLocation>
        <location evidence="1">Cytoplasm</location>
    </subcellularLocation>
</comment>
<comment type="similarity">
    <text evidence="1">Belongs to the PRA-CH family.</text>
</comment>
<gene>
    <name evidence="1" type="primary">hisI</name>
    <name type="ordered locus">Rleg2_1850</name>
</gene>
<organism>
    <name type="scientific">Rhizobium leguminosarum bv. trifolii (strain WSM2304)</name>
    <dbReference type="NCBI Taxonomy" id="395492"/>
    <lineage>
        <taxon>Bacteria</taxon>
        <taxon>Pseudomonadati</taxon>
        <taxon>Pseudomonadota</taxon>
        <taxon>Alphaproteobacteria</taxon>
        <taxon>Hyphomicrobiales</taxon>
        <taxon>Rhizobiaceae</taxon>
        <taxon>Rhizobium/Agrobacterium group</taxon>
        <taxon>Rhizobium</taxon>
    </lineage>
</organism>
<name>HIS3_RHILW</name>
<dbReference type="EC" id="3.5.4.19" evidence="1"/>
<dbReference type="EMBL" id="CP001191">
    <property type="protein sequence ID" value="ACI55135.1"/>
    <property type="molecule type" value="Genomic_DNA"/>
</dbReference>
<dbReference type="RefSeq" id="WP_012557749.1">
    <property type="nucleotide sequence ID" value="NC_011369.1"/>
</dbReference>
<dbReference type="SMR" id="B5ZQK7"/>
<dbReference type="STRING" id="395492.Rleg2_1850"/>
<dbReference type="KEGG" id="rlt:Rleg2_1850"/>
<dbReference type="eggNOG" id="COG0139">
    <property type="taxonomic scope" value="Bacteria"/>
</dbReference>
<dbReference type="HOGENOM" id="CLU_048577_5_0_5"/>
<dbReference type="UniPathway" id="UPA00031">
    <property type="reaction ID" value="UER00008"/>
</dbReference>
<dbReference type="Proteomes" id="UP000008330">
    <property type="component" value="Chromosome"/>
</dbReference>
<dbReference type="GO" id="GO:0005737">
    <property type="term" value="C:cytoplasm"/>
    <property type="evidence" value="ECO:0007669"/>
    <property type="project" value="UniProtKB-SubCell"/>
</dbReference>
<dbReference type="GO" id="GO:0000287">
    <property type="term" value="F:magnesium ion binding"/>
    <property type="evidence" value="ECO:0007669"/>
    <property type="project" value="UniProtKB-UniRule"/>
</dbReference>
<dbReference type="GO" id="GO:0004635">
    <property type="term" value="F:phosphoribosyl-AMP cyclohydrolase activity"/>
    <property type="evidence" value="ECO:0007669"/>
    <property type="project" value="UniProtKB-UniRule"/>
</dbReference>
<dbReference type="GO" id="GO:0008270">
    <property type="term" value="F:zinc ion binding"/>
    <property type="evidence" value="ECO:0007669"/>
    <property type="project" value="UniProtKB-UniRule"/>
</dbReference>
<dbReference type="GO" id="GO:0000105">
    <property type="term" value="P:L-histidine biosynthetic process"/>
    <property type="evidence" value="ECO:0007669"/>
    <property type="project" value="UniProtKB-UniRule"/>
</dbReference>
<dbReference type="FunFam" id="3.10.20.810:FF:000001">
    <property type="entry name" value="Histidine biosynthesis bifunctional protein HisIE"/>
    <property type="match status" value="1"/>
</dbReference>
<dbReference type="Gene3D" id="4.10.80.70">
    <property type="match status" value="1"/>
</dbReference>
<dbReference type="Gene3D" id="3.10.20.810">
    <property type="entry name" value="Phosphoribosyl-AMP cyclohydrolase"/>
    <property type="match status" value="1"/>
</dbReference>
<dbReference type="HAMAP" id="MF_01021">
    <property type="entry name" value="HisI"/>
    <property type="match status" value="1"/>
</dbReference>
<dbReference type="InterPro" id="IPR026660">
    <property type="entry name" value="PRA-CH"/>
</dbReference>
<dbReference type="InterPro" id="IPR002496">
    <property type="entry name" value="PRib_AMP_CycHydrolase_dom"/>
</dbReference>
<dbReference type="InterPro" id="IPR038019">
    <property type="entry name" value="PRib_AMP_CycHydrolase_sf"/>
</dbReference>
<dbReference type="NCBIfam" id="NF000768">
    <property type="entry name" value="PRK00051.1"/>
    <property type="match status" value="1"/>
</dbReference>
<dbReference type="PANTHER" id="PTHR42945">
    <property type="entry name" value="HISTIDINE BIOSYNTHESIS BIFUNCTIONAL PROTEIN"/>
    <property type="match status" value="1"/>
</dbReference>
<dbReference type="PANTHER" id="PTHR42945:SF1">
    <property type="entry name" value="HISTIDINE BIOSYNTHESIS BIFUNCTIONAL PROTEIN HIS7"/>
    <property type="match status" value="1"/>
</dbReference>
<dbReference type="Pfam" id="PF01502">
    <property type="entry name" value="PRA-CH"/>
    <property type="match status" value="1"/>
</dbReference>
<dbReference type="SUPFAM" id="SSF141734">
    <property type="entry name" value="HisI-like"/>
    <property type="match status" value="1"/>
</dbReference>
<feature type="chain" id="PRO_1000135364" description="Phosphoribosyl-AMP cyclohydrolase">
    <location>
        <begin position="1"/>
        <end position="150"/>
    </location>
</feature>
<feature type="binding site" evidence="1">
    <location>
        <position position="93"/>
    </location>
    <ligand>
        <name>Mg(2+)</name>
        <dbReference type="ChEBI" id="CHEBI:18420"/>
    </ligand>
</feature>
<feature type="binding site" evidence="1">
    <location>
        <position position="94"/>
    </location>
    <ligand>
        <name>Zn(2+)</name>
        <dbReference type="ChEBI" id="CHEBI:29105"/>
        <note>ligand shared between dimeric partners</note>
    </ligand>
</feature>
<feature type="binding site" evidence="1">
    <location>
        <position position="95"/>
    </location>
    <ligand>
        <name>Mg(2+)</name>
        <dbReference type="ChEBI" id="CHEBI:18420"/>
    </ligand>
</feature>
<feature type="binding site" evidence="1">
    <location>
        <position position="97"/>
    </location>
    <ligand>
        <name>Mg(2+)</name>
        <dbReference type="ChEBI" id="CHEBI:18420"/>
    </ligand>
</feature>
<feature type="binding site" evidence="1">
    <location>
        <position position="112"/>
    </location>
    <ligand>
        <name>Zn(2+)</name>
        <dbReference type="ChEBI" id="CHEBI:29105"/>
        <note>ligand shared between dimeric partners</note>
    </ligand>
</feature>
<feature type="binding site" evidence="1">
    <location>
        <position position="119"/>
    </location>
    <ligand>
        <name>Zn(2+)</name>
        <dbReference type="ChEBI" id="CHEBI:29105"/>
        <note>ligand shared between dimeric partners</note>
    </ligand>
</feature>